<dbReference type="SMR" id="P0DMH9"/>
<dbReference type="GO" id="GO:0005576">
    <property type="term" value="C:extracellular region"/>
    <property type="evidence" value="ECO:0007669"/>
    <property type="project" value="UniProtKB-SubCell"/>
</dbReference>
<dbReference type="GO" id="GO:0019871">
    <property type="term" value="F:sodium channel inhibitor activity"/>
    <property type="evidence" value="ECO:0007669"/>
    <property type="project" value="InterPro"/>
</dbReference>
<dbReference type="GO" id="GO:0090729">
    <property type="term" value="F:toxin activity"/>
    <property type="evidence" value="ECO:0007669"/>
    <property type="project" value="UniProtKB-KW"/>
</dbReference>
<dbReference type="GO" id="GO:0006952">
    <property type="term" value="P:defense response"/>
    <property type="evidence" value="ECO:0007669"/>
    <property type="project" value="InterPro"/>
</dbReference>
<dbReference type="CDD" id="cd23106">
    <property type="entry name" value="neurotoxins_LC_scorpion"/>
    <property type="match status" value="1"/>
</dbReference>
<dbReference type="FunFam" id="3.30.30.10:FF:000002">
    <property type="entry name" value="Alpha-like toxin BmK-M1"/>
    <property type="match status" value="1"/>
</dbReference>
<dbReference type="Gene3D" id="3.30.30.10">
    <property type="entry name" value="Knottin, scorpion toxin-like"/>
    <property type="match status" value="1"/>
</dbReference>
<dbReference type="InterPro" id="IPR044062">
    <property type="entry name" value="LCN-type_CS_alpha_beta_dom"/>
</dbReference>
<dbReference type="InterPro" id="IPR003614">
    <property type="entry name" value="Scorpion_toxin-like"/>
</dbReference>
<dbReference type="InterPro" id="IPR036574">
    <property type="entry name" value="Scorpion_toxin-like_sf"/>
</dbReference>
<dbReference type="InterPro" id="IPR018218">
    <property type="entry name" value="Scorpion_toxinL"/>
</dbReference>
<dbReference type="InterPro" id="IPR002061">
    <property type="entry name" value="Scorpion_toxinL/defensin"/>
</dbReference>
<dbReference type="Pfam" id="PF00537">
    <property type="entry name" value="Toxin_3"/>
    <property type="match status" value="1"/>
</dbReference>
<dbReference type="PRINTS" id="PR00285">
    <property type="entry name" value="SCORPNTOXIN"/>
</dbReference>
<dbReference type="SMART" id="SM00505">
    <property type="entry name" value="Knot1"/>
    <property type="match status" value="1"/>
</dbReference>
<dbReference type="SUPFAM" id="SSF57095">
    <property type="entry name" value="Scorpion toxin-like"/>
    <property type="match status" value="1"/>
</dbReference>
<dbReference type="PROSITE" id="PS51863">
    <property type="entry name" value="LCN_CSAB"/>
    <property type="match status" value="1"/>
</dbReference>
<proteinExistence type="evidence at transcript level"/>
<keyword id="KW-1015">Disulfide bond</keyword>
<keyword id="KW-0872">Ion channel impairing toxin</keyword>
<keyword id="KW-0528">Neurotoxin</keyword>
<keyword id="KW-0964">Secreted</keyword>
<keyword id="KW-0732">Signal</keyword>
<keyword id="KW-0800">Toxin</keyword>
<keyword id="KW-0738">Voltage-gated sodium channel impairing toxin</keyword>
<feature type="signal peptide" evidence="1">
    <location>
        <begin position="1"/>
        <end position="19"/>
    </location>
</feature>
<feature type="chain" id="PRO_0000428966" description="Alpha-toxin BmalphaTx47">
    <location>
        <begin position="20"/>
        <end position="83"/>
    </location>
</feature>
<feature type="domain" description="LCN-type CS-alpha/beta" evidence="2">
    <location>
        <begin position="21"/>
        <end position="83"/>
    </location>
</feature>
<feature type="disulfide bond" evidence="2">
    <location>
        <begin position="31"/>
        <end position="82"/>
    </location>
</feature>
<feature type="disulfide bond" evidence="2">
    <location>
        <begin position="35"/>
        <end position="55"/>
    </location>
</feature>
<feature type="disulfide bond" evidence="2">
    <location>
        <begin position="41"/>
        <end position="65"/>
    </location>
</feature>
<feature type="disulfide bond" evidence="2">
    <location>
        <begin position="45"/>
        <end position="67"/>
    </location>
</feature>
<reference key="1">
    <citation type="journal article" date="2014" name="Toxins">
        <title>Characterization of a novel BmalphaTX47 toxin modulating sodium channels: the crucial role of expression vectors in toxin pharmacological activity.</title>
        <authorList>
            <person name="Li T."/>
            <person name="Xu L."/>
            <person name="Liu H."/>
            <person name="He Y."/>
            <person name="Liang S."/>
            <person name="Li W."/>
            <person name="Wu Y."/>
        </authorList>
    </citation>
    <scope>NUCLEOTIDE SEQUENCE [MRNA]</scope>
    <scope>FUNCTION</scope>
    <source>
        <tissue>Venom gland</tissue>
    </source>
</reference>
<evidence type="ECO:0000250" key="1"/>
<evidence type="ECO:0000255" key="2">
    <source>
        <dbReference type="PROSITE-ProRule" id="PRU01210"/>
    </source>
</evidence>
<evidence type="ECO:0000269" key="3">
    <source>
    </source>
</evidence>
<evidence type="ECO:0000305" key="4"/>
<organism>
    <name type="scientific">Olivierus martensii</name>
    <name type="common">Manchurian scorpion</name>
    <name type="synonym">Mesobuthus martensii</name>
    <dbReference type="NCBI Taxonomy" id="34649"/>
    <lineage>
        <taxon>Eukaryota</taxon>
        <taxon>Metazoa</taxon>
        <taxon>Ecdysozoa</taxon>
        <taxon>Arthropoda</taxon>
        <taxon>Chelicerata</taxon>
        <taxon>Arachnida</taxon>
        <taxon>Scorpiones</taxon>
        <taxon>Buthida</taxon>
        <taxon>Buthoidea</taxon>
        <taxon>Buthidae</taxon>
        <taxon>Olivierus</taxon>
    </lineage>
</organism>
<sequence length="85" mass="9356">MNYLIVISFALLLMTGVQSGRDAYIADSENCTYTCALNPYCNDLCTKNGAKSGYCQWAGRYGNACWCIDLPDKVPIRISGSCRGR</sequence>
<protein>
    <recommendedName>
        <fullName>Alpha-toxin BmalphaTx47</fullName>
    </recommendedName>
</protein>
<comment type="function">
    <text evidence="3">Alpha toxins bind voltage-independently at site-3 of sodium channels (Nav) and inhibit the inactivation of the activated channels, thereby blocking neuronal transmission. This toxin expressed with the pET-14b vector has low inhibitory activity on sodium channels (11.33% on rNav1.2/SCN2A, 15.96% on mNav1.4/SCN4A and 5.04% on hNav1.5/SCN5A). When expressed with the pET-28a vector, this toxin has higher inhibitory activities (44.12% on rNav1.2/SCN2A, 25.40% on mNav1.4/SCN4A and 65.34% on hNav1.5/SCN5A).</text>
</comment>
<comment type="subcellular location">
    <subcellularLocation>
        <location evidence="1">Secreted</location>
    </subcellularLocation>
</comment>
<comment type="tissue specificity">
    <text>Expressed by the venom gland.</text>
</comment>
<comment type="domain">
    <text evidence="4">Has the structural arrangement of an alpha-helix connected to antiparallel beta-sheets by disulfide bonds (CS-alpha/beta).</text>
</comment>
<comment type="similarity">
    <text evidence="4">Belongs to the long (4 C-C) scorpion toxin superfamily. Sodium channel inhibitor family. Alpha subfamily.</text>
</comment>
<name>SCX47_OLIMR</name>
<accession>P0DMH9</accession>